<protein>
    <recommendedName>
        <fullName evidence="3">Chorismatase</fullName>
        <ecNumber evidence="1">3.3.2.13</ecNumber>
    </recommendedName>
</protein>
<reference key="1">
    <citation type="journal article" date="1995" name="Proc. Natl. Acad. Sci. U.S.A.">
        <title>The biosynthetic gene cluster for the polyketide immunosuppressant rapamycin.</title>
        <authorList>
            <person name="Schwecke T."/>
            <person name="Aparicio J.F."/>
            <person name="Molnar I."/>
            <person name="Koenig A."/>
            <person name="Khaw L.E."/>
            <person name="Haydock S.F."/>
            <person name="Oliynyk M."/>
            <person name="Caffrey P."/>
            <person name="Cortes J."/>
            <person name="Lester J.B."/>
            <person name="Boehm G.A."/>
            <person name="Staunton J."/>
            <person name="Leadlay P.F."/>
        </authorList>
    </citation>
    <scope>NUCLEOTIDE SEQUENCE [GENOMIC DNA]</scope>
    <source>
        <strain>ATCC 29253 / DSM 41530 / NRRL 5491 / AYB-994</strain>
    </source>
</reference>
<reference key="2">
    <citation type="journal article" date="2013" name="Genome Announc.">
        <title>Draft genome sequence of Streptomyces rapamycinicus strain NRRL 5491, the producer of the immunosuppressant rapamycin.</title>
        <authorList>
            <person name="Baranasic D."/>
            <person name="Gacesa R."/>
            <person name="Starcevic A."/>
            <person name="Zucko J."/>
            <person name="Blazic M."/>
            <person name="Horvat M."/>
            <person name="Gjuracic K."/>
            <person name="Fujs S."/>
            <person name="Hranueli D."/>
            <person name="Kosec G."/>
            <person name="Cullum J."/>
            <person name="Petkovic H."/>
        </authorList>
    </citation>
    <scope>NUCLEOTIDE SEQUENCE [LARGE SCALE GENOMIC DNA]</scope>
    <source>
        <strain>ATCC 29253 / DSM 41530 / NRRL 5491 / AYB-994</strain>
    </source>
</reference>
<reference key="3">
    <citation type="journal article" date="2011" name="Proc. Natl. Acad. Sci. U.S.A.">
        <title>Biosynthesis of the immunosuppressants FK506, FK520, and rapamycin involves a previously undescribed family of enzymes acting on chorismate.</title>
        <authorList>
            <person name="Andexer J.N."/>
            <person name="Kendrew S.G."/>
            <person name="Nur-e-Alam M."/>
            <person name="Lazos O."/>
            <person name="Foster T.A."/>
            <person name="Zimmermann A.S."/>
            <person name="Warneck T.D."/>
            <person name="Suthar D."/>
            <person name="Coates N.J."/>
            <person name="Koehn F.E."/>
            <person name="Skotnicki J.S."/>
            <person name="Carter G.T."/>
            <person name="Gregory M.A."/>
            <person name="Martin C.J."/>
            <person name="Moss S.J."/>
            <person name="Leadlay P.F."/>
            <person name="Wilkinson B."/>
        </authorList>
    </citation>
    <scope>FUNCTION</scope>
    <scope>CATALYTIC ACTIVITY</scope>
    <scope>DISRUPTION PHENOTYPE</scope>
</reference>
<organism>
    <name type="scientific">Streptomyces rapamycinicus (strain ATCC 29253 / DSM 41530 / NRRL 5491 / AYB-994)</name>
    <name type="common">Streptomyces hygroscopicus (strain ATCC 29253)</name>
    <dbReference type="NCBI Taxonomy" id="1343740"/>
    <lineage>
        <taxon>Bacteria</taxon>
        <taxon>Bacillati</taxon>
        <taxon>Actinomycetota</taxon>
        <taxon>Actinomycetes</taxon>
        <taxon>Kitasatosporales</taxon>
        <taxon>Streptomycetaceae</taxon>
        <taxon>Streptomyces</taxon>
        <taxon>Streptomyces violaceusniger group</taxon>
    </lineage>
</organism>
<keyword id="KW-0378">Hydrolase</keyword>
<accession>Q54305</accession>
<accession>A0A0A0NW69</accession>
<evidence type="ECO:0000250" key="1">
    <source>
        <dbReference type="UniProtKB" id="Q9KID9"/>
    </source>
</evidence>
<evidence type="ECO:0000269" key="2">
    <source>
    </source>
</evidence>
<evidence type="ECO:0000303" key="3">
    <source>
    </source>
</evidence>
<evidence type="ECO:0000305" key="4"/>
<evidence type="ECO:0000312" key="5">
    <source>
        <dbReference type="EMBL" id="AGP59510.1"/>
    </source>
</evidence>
<dbReference type="EC" id="3.3.2.13" evidence="1"/>
<dbReference type="EMBL" id="X86780">
    <property type="protein sequence ID" value="CAA60468.1"/>
    <property type="status" value="ALT_SEQ"/>
    <property type="molecule type" value="Genomic_DNA"/>
</dbReference>
<dbReference type="EMBL" id="CP006567">
    <property type="protein sequence ID" value="AGP59510.1"/>
    <property type="molecule type" value="Genomic_DNA"/>
</dbReference>
<dbReference type="PIR" id="T30234">
    <property type="entry name" value="T30234"/>
</dbReference>
<dbReference type="RefSeq" id="WP_020872991.1">
    <property type="nucleotide sequence ID" value="NC_022785.1"/>
</dbReference>
<dbReference type="SMR" id="Q54305"/>
<dbReference type="STRING" id="1343740.M271_40655"/>
<dbReference type="KEGG" id="src:M271_40655"/>
<dbReference type="PATRIC" id="fig|1343740.8.peg.6274"/>
<dbReference type="eggNOG" id="COG0251">
    <property type="taxonomic scope" value="Bacteria"/>
</dbReference>
<dbReference type="HOGENOM" id="CLU_060951_0_0_11"/>
<dbReference type="GO" id="GO:0016803">
    <property type="term" value="F:ether hydrolase activity"/>
    <property type="evidence" value="ECO:0000314"/>
    <property type="project" value="UniProtKB"/>
</dbReference>
<dbReference type="CDD" id="cd06153">
    <property type="entry name" value="YjgF_YER057c_UK114_like_5"/>
    <property type="match status" value="1"/>
</dbReference>
<dbReference type="FunFam" id="3.30.1330.40:FF:000031">
    <property type="entry name" value="3-hydroxybenzoate synthase"/>
    <property type="match status" value="1"/>
</dbReference>
<dbReference type="Gene3D" id="3.30.1330.40">
    <property type="entry name" value="RutC-like"/>
    <property type="match status" value="1"/>
</dbReference>
<dbReference type="InterPro" id="IPR031038">
    <property type="entry name" value="Chori_FkbO_Hyg5"/>
</dbReference>
<dbReference type="InterPro" id="IPR049368">
    <property type="entry name" value="FkbO_Hyg5-like_N"/>
</dbReference>
<dbReference type="InterPro" id="IPR035959">
    <property type="entry name" value="RutC-like_sf"/>
</dbReference>
<dbReference type="NCBIfam" id="TIGR04444">
    <property type="entry name" value="chori_FkbO_Hyg5"/>
    <property type="match status" value="1"/>
</dbReference>
<dbReference type="Pfam" id="PF21168">
    <property type="entry name" value="FkbO_Hyg5-like_N"/>
    <property type="match status" value="1"/>
</dbReference>
<dbReference type="SUPFAM" id="SSF55298">
    <property type="entry name" value="YjgF-like"/>
    <property type="match status" value="1"/>
</dbReference>
<feature type="chain" id="PRO_0000435463" description="Chorismatase">
    <location>
        <begin position="1"/>
        <end position="334"/>
    </location>
</feature>
<feature type="active site" description="Proton acceptor" evidence="1">
    <location>
        <position position="328"/>
    </location>
</feature>
<feature type="binding site" evidence="1">
    <location>
        <position position="143"/>
    </location>
    <ligand>
        <name>substrate</name>
    </ligand>
</feature>
<feature type="binding site" evidence="1">
    <location>
        <position position="150"/>
    </location>
    <ligand>
        <name>substrate</name>
    </ligand>
</feature>
<feature type="binding site" evidence="1">
    <location>
        <position position="203"/>
    </location>
    <ligand>
        <name>substrate</name>
    </ligand>
</feature>
<feature type="binding site" evidence="1">
    <location>
        <position position="216"/>
    </location>
    <ligand>
        <name>substrate</name>
    </ligand>
</feature>
<feature type="sequence conflict" description="In Ref. 1; CAA60468." ref="1">
    <original>GS</original>
    <variation>SR</variation>
    <location>
        <begin position="73"/>
        <end position="74"/>
    </location>
</feature>
<feature type="sequence conflict" description="In Ref. 1; CAA60468." ref="1">
    <original>GG</original>
    <variation>AR</variation>
    <location>
        <begin position="175"/>
        <end position="176"/>
    </location>
</feature>
<feature type="sequence conflict" description="In Ref. 1; CAA60468." ref="1">
    <original>RATWLSPPGADD</original>
    <variation>GHLALAAGG</variation>
    <location>
        <begin position="216"/>
        <end position="227"/>
    </location>
</feature>
<feature type="sequence conflict" description="In Ref. 1; CAA60468." ref="1">
    <original>H</original>
    <variation>Q</variation>
    <location>
        <position position="241"/>
    </location>
</feature>
<gene>
    <name type="primary">rapK</name>
    <name evidence="5" type="ORF">M271_40655</name>
</gene>
<name>RAPK_STRRN</name>
<proteinExistence type="evidence at protein level"/>
<sequence length="334" mass="35793">MTPPVTAPYCRFEKLGASDLDGDETLLGVIEHRTGHTGVSLAEGCPRTAVHTTTREDESFAEAWHAEGPKESGSHDGVAWARTPDYLFGVARVPEGGRYAAGTAAVYTGIFDLIGTLGYPSLARTWNYVSGINTPNADGLEVYRDFCVGRAEALDARGIDPATMPAATGIGAHGGGITCYFIAARAGDRVNMENPAVLTAHRYPQRYGPRPPVFSRATWLSPPGADDGRLFVSATAGIVGHETVHHGDVAAQCEVSLENIARVIGAENLGRHGLRRGYALADVDHLKVYVRHREDISTVRRICAERLSREATVAVLHTDIARTDLLVEIEGVVA</sequence>
<comment type="function">
    <text evidence="2">Involved in the biosynthesis of the macrocyclic amino acid-linked polyketides rapamycin which is a potent immunosuppressant that prevents T-cell proliferation through initial binding to the immunophilin FKBP12. Catalyzes the hydrolysis of chorismate via a 1,4-conjugate elimination of water to yield (4R,5R)-4,5-dihydroxycyclohexa-1,5-dienecarboxylic acid (DCDC).</text>
</comment>
<comment type="catalytic activity">
    <reaction evidence="1">
        <text>chorismate + H2O = (3R,4R)-3,4-dihydroxy-3,4-dihydrobenzoate + pyruvate</text>
        <dbReference type="Rhea" id="RHEA:38319"/>
        <dbReference type="ChEBI" id="CHEBI:15361"/>
        <dbReference type="ChEBI" id="CHEBI:15377"/>
        <dbReference type="ChEBI" id="CHEBI:29748"/>
        <dbReference type="ChEBI" id="CHEBI:75717"/>
        <dbReference type="EC" id="3.3.2.13"/>
    </reaction>
</comment>
<comment type="subunit">
    <text evidence="1">Monomer.</text>
</comment>
<comment type="disruption phenotype">
    <text evidence="2">Cells lacking this gene are unable to produce rapamycin.</text>
</comment>
<comment type="similarity">
    <text evidence="4">Belongs to the FkbO/Hyg5 family.</text>
</comment>
<comment type="sequence caution" evidence="4">
    <conflict type="erroneous initiation">
        <sequence resource="EMBL-CDS" id="CAA60468"/>
    </conflict>
    <text>Extended N-terminus.</text>
</comment>
<comment type="sequence caution" evidence="4">
    <conflict type="frameshift">
        <sequence resource="EMBL-CDS" id="CAA60468"/>
    </conflict>
</comment>